<gene>
    <name evidence="1" type="primary">kup</name>
    <name type="ordered locus">MCA0976</name>
</gene>
<proteinExistence type="inferred from homology"/>
<protein>
    <recommendedName>
        <fullName evidence="1">Probable potassium transport system protein Kup</fullName>
    </recommendedName>
</protein>
<reference key="1">
    <citation type="journal article" date="2004" name="PLoS Biol.">
        <title>Genomic insights into methanotrophy: the complete genome sequence of Methylococcus capsulatus (Bath).</title>
        <authorList>
            <person name="Ward N.L."/>
            <person name="Larsen O."/>
            <person name="Sakwa J."/>
            <person name="Bruseth L."/>
            <person name="Khouri H.M."/>
            <person name="Durkin A.S."/>
            <person name="Dimitrov G."/>
            <person name="Jiang L."/>
            <person name="Scanlan D."/>
            <person name="Kang K.H."/>
            <person name="Lewis M.R."/>
            <person name="Nelson K.E."/>
            <person name="Methe B.A."/>
            <person name="Wu M."/>
            <person name="Heidelberg J.F."/>
            <person name="Paulsen I.T."/>
            <person name="Fouts D.E."/>
            <person name="Ravel J."/>
            <person name="Tettelin H."/>
            <person name="Ren Q."/>
            <person name="Read T.D."/>
            <person name="DeBoy R.T."/>
            <person name="Seshadri R."/>
            <person name="Salzberg S.L."/>
            <person name="Jensen H.B."/>
            <person name="Birkeland N.K."/>
            <person name="Nelson W.C."/>
            <person name="Dodson R.J."/>
            <person name="Grindhaug S.H."/>
            <person name="Holt I.E."/>
            <person name="Eidhammer I."/>
            <person name="Jonasen I."/>
            <person name="Vanaken S."/>
            <person name="Utterback T.R."/>
            <person name="Feldblyum T.V."/>
            <person name="Fraser C.M."/>
            <person name="Lillehaug J.R."/>
            <person name="Eisen J.A."/>
        </authorList>
    </citation>
    <scope>NUCLEOTIDE SEQUENCE [LARGE SCALE GENOMIC DNA]</scope>
    <source>
        <strain>ATCC 33009 / NCIMB 11132 / Bath</strain>
    </source>
</reference>
<accession>Q60A92</accession>
<feature type="chain" id="PRO_0000209038" description="Probable potassium transport system protein Kup">
    <location>
        <begin position="1"/>
        <end position="626"/>
    </location>
</feature>
<feature type="transmembrane region" description="Helical" evidence="1">
    <location>
        <begin position="11"/>
        <end position="31"/>
    </location>
</feature>
<feature type="transmembrane region" description="Helical" evidence="1">
    <location>
        <begin position="55"/>
        <end position="75"/>
    </location>
</feature>
<feature type="transmembrane region" description="Helical" evidence="1">
    <location>
        <begin position="103"/>
        <end position="123"/>
    </location>
</feature>
<feature type="transmembrane region" description="Helical" evidence="1">
    <location>
        <begin position="140"/>
        <end position="160"/>
    </location>
</feature>
<feature type="transmembrane region" description="Helical" evidence="1">
    <location>
        <begin position="171"/>
        <end position="191"/>
    </location>
</feature>
<feature type="transmembrane region" description="Helical" evidence="1">
    <location>
        <begin position="216"/>
        <end position="236"/>
    </location>
</feature>
<feature type="transmembrane region" description="Helical" evidence="1">
    <location>
        <begin position="250"/>
        <end position="270"/>
    </location>
</feature>
<feature type="transmembrane region" description="Helical" evidence="1">
    <location>
        <begin position="282"/>
        <end position="302"/>
    </location>
</feature>
<feature type="transmembrane region" description="Helical" evidence="1">
    <location>
        <begin position="340"/>
        <end position="360"/>
    </location>
</feature>
<feature type="transmembrane region" description="Helical" evidence="1">
    <location>
        <begin position="369"/>
        <end position="389"/>
    </location>
</feature>
<feature type="transmembrane region" description="Helical" evidence="1">
    <location>
        <begin position="395"/>
        <end position="415"/>
    </location>
</feature>
<feature type="transmembrane region" description="Helical" evidence="1">
    <location>
        <begin position="422"/>
        <end position="442"/>
    </location>
</feature>
<evidence type="ECO:0000255" key="1">
    <source>
        <dbReference type="HAMAP-Rule" id="MF_01522"/>
    </source>
</evidence>
<name>KUP_METCA</name>
<dbReference type="EMBL" id="AE017282">
    <property type="protein sequence ID" value="AAU92977.1"/>
    <property type="molecule type" value="Genomic_DNA"/>
</dbReference>
<dbReference type="RefSeq" id="WP_010960281.1">
    <property type="nucleotide sequence ID" value="NC_002977.6"/>
</dbReference>
<dbReference type="SMR" id="Q60A92"/>
<dbReference type="STRING" id="243233.MCA0976"/>
<dbReference type="GeneID" id="88223272"/>
<dbReference type="KEGG" id="mca:MCA0976"/>
<dbReference type="eggNOG" id="COG3158">
    <property type="taxonomic scope" value="Bacteria"/>
</dbReference>
<dbReference type="HOGENOM" id="CLU_008142_4_2_6"/>
<dbReference type="Proteomes" id="UP000006821">
    <property type="component" value="Chromosome"/>
</dbReference>
<dbReference type="GO" id="GO:0005886">
    <property type="term" value="C:plasma membrane"/>
    <property type="evidence" value="ECO:0007669"/>
    <property type="project" value="UniProtKB-SubCell"/>
</dbReference>
<dbReference type="GO" id="GO:0015079">
    <property type="term" value="F:potassium ion transmembrane transporter activity"/>
    <property type="evidence" value="ECO:0007669"/>
    <property type="project" value="UniProtKB-UniRule"/>
</dbReference>
<dbReference type="GO" id="GO:0015293">
    <property type="term" value="F:symporter activity"/>
    <property type="evidence" value="ECO:0007669"/>
    <property type="project" value="UniProtKB-UniRule"/>
</dbReference>
<dbReference type="HAMAP" id="MF_01522">
    <property type="entry name" value="Kup"/>
    <property type="match status" value="1"/>
</dbReference>
<dbReference type="InterPro" id="IPR003855">
    <property type="entry name" value="K+_transporter"/>
</dbReference>
<dbReference type="InterPro" id="IPR053952">
    <property type="entry name" value="K_trans_C"/>
</dbReference>
<dbReference type="InterPro" id="IPR053951">
    <property type="entry name" value="K_trans_N"/>
</dbReference>
<dbReference type="InterPro" id="IPR023051">
    <property type="entry name" value="Kup"/>
</dbReference>
<dbReference type="PANTHER" id="PTHR30540:SF79">
    <property type="entry name" value="LOW AFFINITY POTASSIUM TRANSPORT SYSTEM PROTEIN KUP"/>
    <property type="match status" value="1"/>
</dbReference>
<dbReference type="PANTHER" id="PTHR30540">
    <property type="entry name" value="OSMOTIC STRESS POTASSIUM TRANSPORTER"/>
    <property type="match status" value="1"/>
</dbReference>
<dbReference type="Pfam" id="PF02705">
    <property type="entry name" value="K_trans"/>
    <property type="match status" value="1"/>
</dbReference>
<dbReference type="Pfam" id="PF22776">
    <property type="entry name" value="K_trans_C"/>
    <property type="match status" value="1"/>
</dbReference>
<sequence length="626" mass="68749">MDRTKSKSSGFLTLSAGALGVVYGDIGTSPLYTVREIFGGAYAIQLTQENILGALSLIFWALFIIVAVKYVVFVMHADNHGEGGIMALTALALRQRHRRKHRAWIISLGLFGTALFYGDGMITPAISVLGAMEGLGIATAALSHYVVPASILILLALFLIQRRGTERVGRLFGPIMLLWFLSIGTLGFVSLRQTPEVLAALNPLHGFRFLTAHQGLGFAALGAVVLAVTGAEALYADMGHFGKAPIRVTWFAVVFPSLILNYLGQGALLIRNPEAVQNPFYLLVPEWALYPMIGLATAATVIASQAVISGAFSLTHQAIQLDYLPRQRMVHTSESERGQIYAPAVNRLLLISVLALVLAFGSSSRLASAYGLAVVGTMVVTTLLALVVAHDTWRWPGLALLVTGAVLLSVDLSFLTANLAKLGDGGWIPLSLGLILATVMSTWKKGRDVLFARLQQESESLSRFLQRLTDEPPPFRPVGTAIFLTARNLSLPFALLRNYEHNQVIHQRVILLTMTTLDKPYAAEKEKITIEALEHNFFRITTRFGFMERPNVLRMLNLCRHAGLHIDLEQTTFFLGRETLIRSAERGLNRWEEVLFISMFRNAYNPTGYFKLPVDRVVELGTVIAI</sequence>
<comment type="function">
    <text evidence="1">Transport of potassium into the cell. Likely operates as a K(+):H(+) symporter.</text>
</comment>
<comment type="catalytic activity">
    <reaction evidence="1">
        <text>K(+)(in) + H(+)(in) = K(+)(out) + H(+)(out)</text>
        <dbReference type="Rhea" id="RHEA:28490"/>
        <dbReference type="ChEBI" id="CHEBI:15378"/>
        <dbReference type="ChEBI" id="CHEBI:29103"/>
    </reaction>
    <physiologicalReaction direction="right-to-left" evidence="1">
        <dbReference type="Rhea" id="RHEA:28492"/>
    </physiologicalReaction>
</comment>
<comment type="subcellular location">
    <subcellularLocation>
        <location evidence="1">Cell inner membrane</location>
        <topology evidence="1">Multi-pass membrane protein</topology>
    </subcellularLocation>
</comment>
<comment type="similarity">
    <text evidence="1">Belongs to the HAK/KUP transporter (TC 2.A.72) family.</text>
</comment>
<organism>
    <name type="scientific">Methylococcus capsulatus (strain ATCC 33009 / NCIMB 11132 / Bath)</name>
    <dbReference type="NCBI Taxonomy" id="243233"/>
    <lineage>
        <taxon>Bacteria</taxon>
        <taxon>Pseudomonadati</taxon>
        <taxon>Pseudomonadota</taxon>
        <taxon>Gammaproteobacteria</taxon>
        <taxon>Methylococcales</taxon>
        <taxon>Methylococcaceae</taxon>
        <taxon>Methylococcus</taxon>
    </lineage>
</organism>
<keyword id="KW-0997">Cell inner membrane</keyword>
<keyword id="KW-1003">Cell membrane</keyword>
<keyword id="KW-0406">Ion transport</keyword>
<keyword id="KW-0472">Membrane</keyword>
<keyword id="KW-0630">Potassium</keyword>
<keyword id="KW-0633">Potassium transport</keyword>
<keyword id="KW-1185">Reference proteome</keyword>
<keyword id="KW-0769">Symport</keyword>
<keyword id="KW-0812">Transmembrane</keyword>
<keyword id="KW-1133">Transmembrane helix</keyword>
<keyword id="KW-0813">Transport</keyword>